<accession>A9R0E2</accession>
<reference key="1">
    <citation type="journal article" date="2010" name="J. Bacteriol.">
        <title>Genome sequence of the deep-rooted Yersinia pestis strain Angola reveals new insights into the evolution and pangenome of the plague bacterium.</title>
        <authorList>
            <person name="Eppinger M."/>
            <person name="Worsham P.L."/>
            <person name="Nikolich M.P."/>
            <person name="Riley D.R."/>
            <person name="Sebastian Y."/>
            <person name="Mou S."/>
            <person name="Achtman M."/>
            <person name="Lindler L.E."/>
            <person name="Ravel J."/>
        </authorList>
    </citation>
    <scope>NUCLEOTIDE SEQUENCE [LARGE SCALE GENOMIC DNA]</scope>
    <source>
        <strain>Angola</strain>
    </source>
</reference>
<organism>
    <name type="scientific">Yersinia pestis bv. Antiqua (strain Angola)</name>
    <dbReference type="NCBI Taxonomy" id="349746"/>
    <lineage>
        <taxon>Bacteria</taxon>
        <taxon>Pseudomonadati</taxon>
        <taxon>Pseudomonadota</taxon>
        <taxon>Gammaproteobacteria</taxon>
        <taxon>Enterobacterales</taxon>
        <taxon>Yersiniaceae</taxon>
        <taxon>Yersinia</taxon>
    </lineage>
</organism>
<keyword id="KW-0997">Cell inner membrane</keyword>
<keyword id="KW-1003">Cell membrane</keyword>
<keyword id="KW-0378">Hydrolase</keyword>
<keyword id="KW-0472">Membrane</keyword>
<keyword id="KW-0479">Metal-binding</keyword>
<keyword id="KW-0482">Metalloprotease</keyword>
<keyword id="KW-0645">Protease</keyword>
<keyword id="KW-0812">Transmembrane</keyword>
<keyword id="KW-1133">Transmembrane helix</keyword>
<keyword id="KW-0862">Zinc</keyword>
<feature type="chain" id="PRO_1000098864" description="Protease HtpX">
    <location>
        <begin position="1"/>
        <end position="293"/>
    </location>
</feature>
<feature type="transmembrane region" description="Helical" evidence="1">
    <location>
        <begin position="4"/>
        <end position="24"/>
    </location>
</feature>
<feature type="transmembrane region" description="Helical" evidence="1">
    <location>
        <begin position="34"/>
        <end position="54"/>
    </location>
</feature>
<feature type="transmembrane region" description="Helical" evidence="1">
    <location>
        <begin position="158"/>
        <end position="178"/>
    </location>
</feature>
<feature type="transmembrane region" description="Helical" evidence="1">
    <location>
        <begin position="193"/>
        <end position="213"/>
    </location>
</feature>
<feature type="active site" evidence="1">
    <location>
        <position position="140"/>
    </location>
</feature>
<feature type="binding site" evidence="1">
    <location>
        <position position="139"/>
    </location>
    <ligand>
        <name>Zn(2+)</name>
        <dbReference type="ChEBI" id="CHEBI:29105"/>
        <note>catalytic</note>
    </ligand>
</feature>
<feature type="binding site" evidence="1">
    <location>
        <position position="143"/>
    </location>
    <ligand>
        <name>Zn(2+)</name>
        <dbReference type="ChEBI" id="CHEBI:29105"/>
        <note>catalytic</note>
    </ligand>
</feature>
<feature type="binding site" evidence="1">
    <location>
        <position position="222"/>
    </location>
    <ligand>
        <name>Zn(2+)</name>
        <dbReference type="ChEBI" id="CHEBI:29105"/>
        <note>catalytic</note>
    </ligand>
</feature>
<protein>
    <recommendedName>
        <fullName evidence="1">Protease HtpX</fullName>
        <ecNumber evidence="1">3.4.24.-</ecNumber>
    </recommendedName>
    <alternativeName>
        <fullName evidence="1">Heat shock protein HtpX</fullName>
    </alternativeName>
</protein>
<evidence type="ECO:0000255" key="1">
    <source>
        <dbReference type="HAMAP-Rule" id="MF_00188"/>
    </source>
</evidence>
<proteinExistence type="inferred from homology"/>
<name>HTPX_YERPG</name>
<dbReference type="EC" id="3.4.24.-" evidence="1"/>
<dbReference type="EMBL" id="CP000901">
    <property type="protein sequence ID" value="ABX86441.1"/>
    <property type="molecule type" value="Genomic_DNA"/>
</dbReference>
<dbReference type="RefSeq" id="WP_002210847.1">
    <property type="nucleotide sequence ID" value="NZ_CP009935.1"/>
</dbReference>
<dbReference type="SMR" id="A9R0E2"/>
<dbReference type="MEROPS" id="M48.002"/>
<dbReference type="GeneID" id="57976872"/>
<dbReference type="KEGG" id="ypg:YpAngola_A2662"/>
<dbReference type="PATRIC" id="fig|349746.12.peg.3690"/>
<dbReference type="GO" id="GO:0005886">
    <property type="term" value="C:plasma membrane"/>
    <property type="evidence" value="ECO:0007669"/>
    <property type="project" value="UniProtKB-SubCell"/>
</dbReference>
<dbReference type="GO" id="GO:0004222">
    <property type="term" value="F:metalloendopeptidase activity"/>
    <property type="evidence" value="ECO:0007669"/>
    <property type="project" value="UniProtKB-UniRule"/>
</dbReference>
<dbReference type="GO" id="GO:0008270">
    <property type="term" value="F:zinc ion binding"/>
    <property type="evidence" value="ECO:0007669"/>
    <property type="project" value="UniProtKB-UniRule"/>
</dbReference>
<dbReference type="GO" id="GO:0006508">
    <property type="term" value="P:proteolysis"/>
    <property type="evidence" value="ECO:0007669"/>
    <property type="project" value="UniProtKB-KW"/>
</dbReference>
<dbReference type="CDD" id="cd07335">
    <property type="entry name" value="M48B_HtpX_like"/>
    <property type="match status" value="1"/>
</dbReference>
<dbReference type="FunFam" id="3.30.2010.10:FF:000001">
    <property type="entry name" value="Protease HtpX"/>
    <property type="match status" value="1"/>
</dbReference>
<dbReference type="Gene3D" id="3.30.2010.10">
    <property type="entry name" value="Metalloproteases ('zincins'), catalytic domain"/>
    <property type="match status" value="1"/>
</dbReference>
<dbReference type="HAMAP" id="MF_00188">
    <property type="entry name" value="Pept_M48_protease_HtpX"/>
    <property type="match status" value="1"/>
</dbReference>
<dbReference type="InterPro" id="IPR050083">
    <property type="entry name" value="HtpX_protease"/>
</dbReference>
<dbReference type="InterPro" id="IPR022919">
    <property type="entry name" value="Pept_M48_protease_HtpX"/>
</dbReference>
<dbReference type="InterPro" id="IPR001915">
    <property type="entry name" value="Peptidase_M48"/>
</dbReference>
<dbReference type="NCBIfam" id="NF003965">
    <property type="entry name" value="PRK05457.1"/>
    <property type="match status" value="1"/>
</dbReference>
<dbReference type="PANTHER" id="PTHR43221">
    <property type="entry name" value="PROTEASE HTPX"/>
    <property type="match status" value="1"/>
</dbReference>
<dbReference type="PANTHER" id="PTHR43221:SF1">
    <property type="entry name" value="PROTEASE HTPX"/>
    <property type="match status" value="1"/>
</dbReference>
<dbReference type="Pfam" id="PF01435">
    <property type="entry name" value="Peptidase_M48"/>
    <property type="match status" value="1"/>
</dbReference>
<sequence length="293" mass="32064">MMRIALFLLTNLAVMLVFGLVLSLTGIQSSSVQGLMIMAGLFGFGGAFVSLLMSKWMALRSVGGEVIERPRNETEYWLLETVRRQSQQVGIAMPQVAIYQAPDINAFATGARRDASLVAVSTGLLQNMSRDEAEAVIAHEISHVANGDMVTMTLIQGVVNTFVIFISRLIAQIAAGFLSGDRDGESNSPGNPMVYFAVSMVLELVFGILASIITMWFSRHREFHADAGSAKLVGREKMIAALQRLKTSYEPQEAGSMMAFCINGKSKTFSELFMSHPPLDKRIEALRSGQYLK</sequence>
<gene>
    <name evidence="1" type="primary">htpX</name>
    <name type="ordered locus">YpAngola_A2662</name>
</gene>
<comment type="cofactor">
    <cofactor evidence="1">
        <name>Zn(2+)</name>
        <dbReference type="ChEBI" id="CHEBI:29105"/>
    </cofactor>
    <text evidence="1">Binds 1 zinc ion per subunit.</text>
</comment>
<comment type="subcellular location">
    <subcellularLocation>
        <location evidence="1">Cell inner membrane</location>
        <topology evidence="1">Multi-pass membrane protein</topology>
    </subcellularLocation>
</comment>
<comment type="similarity">
    <text evidence="1">Belongs to the peptidase M48B family.</text>
</comment>